<reference key="1">
    <citation type="journal article" date="1988" name="Nucleic Acids Res.">
        <title>Genome organization of Artemia mitochondrial DNA.</title>
        <authorList>
            <person name="Batuecas B."/>
            <person name="Garesse R."/>
            <person name="Calleja M."/>
            <person name="Valverde J.R."/>
            <person name="Marco R."/>
        </authorList>
    </citation>
    <scope>NUCLEOTIDE SEQUENCE [GENOMIC DNA]</scope>
</reference>
<accession>P19040</accession>
<name>NU1M_ARTSA</name>
<gene>
    <name type="primary">ND1</name>
</gene>
<evidence type="ECO:0000250" key="1"/>
<evidence type="ECO:0000255" key="2"/>
<evidence type="ECO:0000305" key="3"/>
<protein>
    <recommendedName>
        <fullName>NADH-ubiquinone oxidoreductase chain 1</fullName>
        <ecNumber>7.1.1.2</ecNumber>
    </recommendedName>
    <alternativeName>
        <fullName>NADH dehydrogenase subunit 1</fullName>
    </alternativeName>
</protein>
<feature type="chain" id="PRO_0000117346" description="NADH-ubiquinone oxidoreductase chain 1">
    <location>
        <begin position="1" status="less than"/>
        <end position="130"/>
    </location>
</feature>
<feature type="transmembrane region" description="Helical" evidence="2">
    <location>
        <begin position="45"/>
        <end position="65"/>
    </location>
</feature>
<feature type="non-consecutive residues" evidence="3">
    <location>
        <begin position="54"/>
        <end position="55"/>
    </location>
</feature>
<feature type="non-terminal residue">
    <location>
        <position position="1"/>
    </location>
</feature>
<sequence>LAETNRTPFDLAEGECQVSVGFNTEYMHSSVGFALIMLSESEYASILFMSLFSVMFCLVVYSYLWSRGSYPRYRYDNLMHLCWKTSFTYIFNIPVFLLKPFSSGLKNKDPWLYNQPYSAFKTDALIGQGV</sequence>
<dbReference type="EC" id="7.1.1.2"/>
<dbReference type="EMBL" id="X07658">
    <property type="protein sequence ID" value="CAA30504.1"/>
    <property type="molecule type" value="Genomic_DNA"/>
</dbReference>
<dbReference type="EMBL" id="X07659">
    <property type="protein sequence ID" value="CAA30505.1"/>
    <property type="molecule type" value="Genomic_DNA"/>
</dbReference>
<dbReference type="SMR" id="P19040"/>
<dbReference type="GO" id="GO:0005743">
    <property type="term" value="C:mitochondrial inner membrane"/>
    <property type="evidence" value="ECO:0007669"/>
    <property type="project" value="UniProtKB-SubCell"/>
</dbReference>
<dbReference type="GO" id="GO:0008137">
    <property type="term" value="F:NADH dehydrogenase (ubiquinone) activity"/>
    <property type="evidence" value="ECO:0007669"/>
    <property type="project" value="UniProtKB-EC"/>
</dbReference>
<dbReference type="GO" id="GO:0009060">
    <property type="term" value="P:aerobic respiration"/>
    <property type="evidence" value="ECO:0007669"/>
    <property type="project" value="TreeGrafter"/>
</dbReference>
<dbReference type="InterPro" id="IPR001694">
    <property type="entry name" value="NADH_UbQ_OxRdtase_su1/FPO"/>
</dbReference>
<dbReference type="InterPro" id="IPR018086">
    <property type="entry name" value="NADH_UbQ_OxRdtase_su1_CS"/>
</dbReference>
<dbReference type="PANTHER" id="PTHR11432">
    <property type="entry name" value="NADH DEHYDROGENASE SUBUNIT 1"/>
    <property type="match status" value="1"/>
</dbReference>
<dbReference type="PANTHER" id="PTHR11432:SF3">
    <property type="entry name" value="NADH-UBIQUINONE OXIDOREDUCTASE CHAIN 1"/>
    <property type="match status" value="1"/>
</dbReference>
<dbReference type="Pfam" id="PF00146">
    <property type="entry name" value="NADHdh"/>
    <property type="match status" value="1"/>
</dbReference>
<dbReference type="PROSITE" id="PS00668">
    <property type="entry name" value="COMPLEX1_ND1_2"/>
    <property type="match status" value="1"/>
</dbReference>
<organism>
    <name type="scientific">Artemia salina</name>
    <name type="common">Brine shrimp</name>
    <dbReference type="NCBI Taxonomy" id="85549"/>
    <lineage>
        <taxon>Eukaryota</taxon>
        <taxon>Metazoa</taxon>
        <taxon>Ecdysozoa</taxon>
        <taxon>Arthropoda</taxon>
        <taxon>Crustacea</taxon>
        <taxon>Branchiopoda</taxon>
        <taxon>Anostraca</taxon>
        <taxon>Artemiidae</taxon>
        <taxon>Artemia</taxon>
    </lineage>
</organism>
<geneLocation type="mitochondrion"/>
<comment type="function">
    <text evidence="1">Core subunit of the mitochondrial membrane respiratory chain NADH dehydrogenase (Complex I) that is believed to belong to the minimal assembly required for catalysis. Complex I functions in the transfer of electrons from NADH to the respiratory chain. The immediate electron acceptor for the enzyme is believed to be ubiquinone (By similarity).</text>
</comment>
<comment type="catalytic activity">
    <reaction>
        <text>a ubiquinone + NADH + 5 H(+)(in) = a ubiquinol + NAD(+) + 4 H(+)(out)</text>
        <dbReference type="Rhea" id="RHEA:29091"/>
        <dbReference type="Rhea" id="RHEA-COMP:9565"/>
        <dbReference type="Rhea" id="RHEA-COMP:9566"/>
        <dbReference type="ChEBI" id="CHEBI:15378"/>
        <dbReference type="ChEBI" id="CHEBI:16389"/>
        <dbReference type="ChEBI" id="CHEBI:17976"/>
        <dbReference type="ChEBI" id="CHEBI:57540"/>
        <dbReference type="ChEBI" id="CHEBI:57945"/>
        <dbReference type="EC" id="7.1.1.2"/>
    </reaction>
</comment>
<comment type="subcellular location">
    <subcellularLocation>
        <location evidence="1">Mitochondrion inner membrane</location>
        <topology evidence="1">Multi-pass membrane protein</topology>
    </subcellularLocation>
</comment>
<comment type="similarity">
    <text evidence="3">Belongs to the complex I subunit 1 family.</text>
</comment>
<keyword id="KW-0249">Electron transport</keyword>
<keyword id="KW-0472">Membrane</keyword>
<keyword id="KW-0496">Mitochondrion</keyword>
<keyword id="KW-0999">Mitochondrion inner membrane</keyword>
<keyword id="KW-0520">NAD</keyword>
<keyword id="KW-0679">Respiratory chain</keyword>
<keyword id="KW-1278">Translocase</keyword>
<keyword id="KW-0812">Transmembrane</keyword>
<keyword id="KW-1133">Transmembrane helix</keyword>
<keyword id="KW-0813">Transport</keyword>
<keyword id="KW-0830">Ubiquinone</keyword>
<proteinExistence type="inferred from homology"/>